<gene>
    <name evidence="1" type="primary">rph</name>
    <name type="ordered locus">PPA1674</name>
</gene>
<accession>Q6A759</accession>
<reference key="1">
    <citation type="journal article" date="2004" name="Science">
        <title>The complete genome sequence of Propionibacterium acnes, a commensal of human skin.</title>
        <authorList>
            <person name="Brueggemann H."/>
            <person name="Henne A."/>
            <person name="Hoster F."/>
            <person name="Liesegang H."/>
            <person name="Wiezer A."/>
            <person name="Strittmatter A."/>
            <person name="Hujer S."/>
            <person name="Duerre P."/>
            <person name="Gottschalk G."/>
        </authorList>
    </citation>
    <scope>NUCLEOTIDE SEQUENCE [LARGE SCALE GENOMIC DNA]</scope>
    <source>
        <strain>DSM 16379 / KPA171202</strain>
    </source>
</reference>
<sequence length="244" mass="26103">MSETSRIDGRRLDQLRDVRIERGWLSQAEGSVLVSFGRTTVLCNASVTEGVPRWRKGSGLGWVTAEYEMLPRATNERSGRESRKGKVGGRTHEISRLVGRSLRAVVDDKALGENTIILDCDVLQADGGTRTASITGAYVALIDAVNWLRGRGGLVSEPIIGSVQAISVGVVDGIPMLDLAYKEDSRADTDMNVVMSGNGDFVEIQGTAEGTPFNRNLLNELLDLAAGGCATLKQAQSEALGVTL</sequence>
<keyword id="KW-0548">Nucleotidyltransferase</keyword>
<keyword id="KW-0694">RNA-binding</keyword>
<keyword id="KW-0698">rRNA processing</keyword>
<keyword id="KW-0808">Transferase</keyword>
<keyword id="KW-0819">tRNA processing</keyword>
<keyword id="KW-0820">tRNA-binding</keyword>
<protein>
    <recommendedName>
        <fullName evidence="1">Ribonuclease PH</fullName>
        <shortName evidence="1">RNase PH</shortName>
        <ecNumber evidence="1">2.7.7.56</ecNumber>
    </recommendedName>
    <alternativeName>
        <fullName evidence="1">tRNA nucleotidyltransferase</fullName>
    </alternativeName>
</protein>
<name>RNPH_CUTAK</name>
<organism>
    <name type="scientific">Cutibacterium acnes (strain DSM 16379 / KPA171202)</name>
    <name type="common">Propionibacterium acnes</name>
    <dbReference type="NCBI Taxonomy" id="267747"/>
    <lineage>
        <taxon>Bacteria</taxon>
        <taxon>Bacillati</taxon>
        <taxon>Actinomycetota</taxon>
        <taxon>Actinomycetes</taxon>
        <taxon>Propionibacteriales</taxon>
        <taxon>Propionibacteriaceae</taxon>
        <taxon>Cutibacterium</taxon>
    </lineage>
</organism>
<comment type="function">
    <text evidence="1">Phosphorolytic 3'-5' exoribonuclease that plays an important role in tRNA 3'-end maturation. Removes nucleotide residues following the 3'-CCA terminus of tRNAs; can also add nucleotides to the ends of RNA molecules by using nucleoside diphosphates as substrates, but this may not be physiologically important. Probably plays a role in initiation of 16S rRNA degradation (leading to ribosome degradation) during starvation.</text>
</comment>
<comment type="catalytic activity">
    <reaction evidence="1">
        <text>tRNA(n+1) + phosphate = tRNA(n) + a ribonucleoside 5'-diphosphate</text>
        <dbReference type="Rhea" id="RHEA:10628"/>
        <dbReference type="Rhea" id="RHEA-COMP:17343"/>
        <dbReference type="Rhea" id="RHEA-COMP:17344"/>
        <dbReference type="ChEBI" id="CHEBI:43474"/>
        <dbReference type="ChEBI" id="CHEBI:57930"/>
        <dbReference type="ChEBI" id="CHEBI:173114"/>
        <dbReference type="EC" id="2.7.7.56"/>
    </reaction>
</comment>
<comment type="subunit">
    <text evidence="1">Homohexameric ring arranged as a trimer of dimers.</text>
</comment>
<comment type="similarity">
    <text evidence="1">Belongs to the RNase PH family.</text>
</comment>
<comment type="sequence caution" evidence="2">
    <conflict type="erroneous initiation">
        <sequence resource="EMBL-CDS" id="AAT83406"/>
    </conflict>
    <text>Extended N-terminus.</text>
</comment>
<proteinExistence type="inferred from homology"/>
<evidence type="ECO:0000255" key="1">
    <source>
        <dbReference type="HAMAP-Rule" id="MF_00564"/>
    </source>
</evidence>
<evidence type="ECO:0000305" key="2"/>
<feature type="chain" id="PRO_0000139922" description="Ribonuclease PH">
    <location>
        <begin position="1"/>
        <end position="244"/>
    </location>
</feature>
<feature type="binding site" evidence="1">
    <location>
        <position position="90"/>
    </location>
    <ligand>
        <name>phosphate</name>
        <dbReference type="ChEBI" id="CHEBI:43474"/>
        <note>substrate</note>
    </ligand>
</feature>
<feature type="binding site" evidence="1">
    <location>
        <begin position="128"/>
        <end position="130"/>
    </location>
    <ligand>
        <name>phosphate</name>
        <dbReference type="ChEBI" id="CHEBI:43474"/>
        <note>substrate</note>
    </ligand>
</feature>
<dbReference type="EC" id="2.7.7.56" evidence="1"/>
<dbReference type="EMBL" id="AE017283">
    <property type="protein sequence ID" value="AAT83406.1"/>
    <property type="status" value="ALT_INIT"/>
    <property type="molecule type" value="Genomic_DNA"/>
</dbReference>
<dbReference type="RefSeq" id="WP_011183903.1">
    <property type="nucleotide sequence ID" value="NZ_CP025935.1"/>
</dbReference>
<dbReference type="SMR" id="Q6A759"/>
<dbReference type="EnsemblBacteria" id="AAT83406">
    <property type="protein sequence ID" value="AAT83406"/>
    <property type="gene ID" value="PPA1674"/>
</dbReference>
<dbReference type="KEGG" id="pac:PPA1674"/>
<dbReference type="eggNOG" id="COG0689">
    <property type="taxonomic scope" value="Bacteria"/>
</dbReference>
<dbReference type="HOGENOM" id="CLU_050858_0_0_11"/>
<dbReference type="Proteomes" id="UP000000603">
    <property type="component" value="Chromosome"/>
</dbReference>
<dbReference type="GO" id="GO:0000175">
    <property type="term" value="F:3'-5'-RNA exonuclease activity"/>
    <property type="evidence" value="ECO:0007669"/>
    <property type="project" value="UniProtKB-UniRule"/>
</dbReference>
<dbReference type="GO" id="GO:0000049">
    <property type="term" value="F:tRNA binding"/>
    <property type="evidence" value="ECO:0007669"/>
    <property type="project" value="UniProtKB-UniRule"/>
</dbReference>
<dbReference type="GO" id="GO:0009022">
    <property type="term" value="F:tRNA nucleotidyltransferase activity"/>
    <property type="evidence" value="ECO:0007669"/>
    <property type="project" value="UniProtKB-UniRule"/>
</dbReference>
<dbReference type="GO" id="GO:0016075">
    <property type="term" value="P:rRNA catabolic process"/>
    <property type="evidence" value="ECO:0007669"/>
    <property type="project" value="UniProtKB-UniRule"/>
</dbReference>
<dbReference type="GO" id="GO:0006364">
    <property type="term" value="P:rRNA processing"/>
    <property type="evidence" value="ECO:0007669"/>
    <property type="project" value="UniProtKB-KW"/>
</dbReference>
<dbReference type="GO" id="GO:0008033">
    <property type="term" value="P:tRNA processing"/>
    <property type="evidence" value="ECO:0007669"/>
    <property type="project" value="UniProtKB-UniRule"/>
</dbReference>
<dbReference type="CDD" id="cd11362">
    <property type="entry name" value="RNase_PH_bact"/>
    <property type="match status" value="1"/>
</dbReference>
<dbReference type="FunFam" id="3.30.230.70:FF:000003">
    <property type="entry name" value="Ribonuclease PH"/>
    <property type="match status" value="1"/>
</dbReference>
<dbReference type="Gene3D" id="3.30.230.70">
    <property type="entry name" value="GHMP Kinase, N-terminal domain"/>
    <property type="match status" value="1"/>
</dbReference>
<dbReference type="HAMAP" id="MF_00564">
    <property type="entry name" value="RNase_PH"/>
    <property type="match status" value="1"/>
</dbReference>
<dbReference type="InterPro" id="IPR001247">
    <property type="entry name" value="ExoRNase_PH_dom1"/>
</dbReference>
<dbReference type="InterPro" id="IPR015847">
    <property type="entry name" value="ExoRNase_PH_dom2"/>
</dbReference>
<dbReference type="InterPro" id="IPR036345">
    <property type="entry name" value="ExoRNase_PH_dom2_sf"/>
</dbReference>
<dbReference type="InterPro" id="IPR027408">
    <property type="entry name" value="PNPase/RNase_PH_dom_sf"/>
</dbReference>
<dbReference type="InterPro" id="IPR020568">
    <property type="entry name" value="Ribosomal_Su5_D2-typ_SF"/>
</dbReference>
<dbReference type="InterPro" id="IPR050080">
    <property type="entry name" value="RNase_PH"/>
</dbReference>
<dbReference type="InterPro" id="IPR002381">
    <property type="entry name" value="RNase_PH_bac-type"/>
</dbReference>
<dbReference type="InterPro" id="IPR018336">
    <property type="entry name" value="RNase_PH_CS"/>
</dbReference>
<dbReference type="NCBIfam" id="TIGR01966">
    <property type="entry name" value="RNasePH"/>
    <property type="match status" value="1"/>
</dbReference>
<dbReference type="PANTHER" id="PTHR11953">
    <property type="entry name" value="EXOSOME COMPLEX COMPONENT"/>
    <property type="match status" value="1"/>
</dbReference>
<dbReference type="PANTHER" id="PTHR11953:SF0">
    <property type="entry name" value="EXOSOME COMPLEX COMPONENT RRP41"/>
    <property type="match status" value="1"/>
</dbReference>
<dbReference type="Pfam" id="PF01138">
    <property type="entry name" value="RNase_PH"/>
    <property type="match status" value="1"/>
</dbReference>
<dbReference type="Pfam" id="PF03725">
    <property type="entry name" value="RNase_PH_C"/>
    <property type="match status" value="1"/>
</dbReference>
<dbReference type="SUPFAM" id="SSF55666">
    <property type="entry name" value="Ribonuclease PH domain 2-like"/>
    <property type="match status" value="1"/>
</dbReference>
<dbReference type="SUPFAM" id="SSF54211">
    <property type="entry name" value="Ribosomal protein S5 domain 2-like"/>
    <property type="match status" value="1"/>
</dbReference>
<dbReference type="PROSITE" id="PS01277">
    <property type="entry name" value="RIBONUCLEASE_PH"/>
    <property type="match status" value="1"/>
</dbReference>